<name>LPXB_SALTI</name>
<dbReference type="EC" id="2.4.1.182" evidence="1"/>
<dbReference type="EMBL" id="AL513382">
    <property type="protein sequence ID" value="CAD08687.1"/>
    <property type="molecule type" value="Genomic_DNA"/>
</dbReference>
<dbReference type="EMBL" id="AE014613">
    <property type="protein sequence ID" value="AAO67960.1"/>
    <property type="molecule type" value="Genomic_DNA"/>
</dbReference>
<dbReference type="RefSeq" id="NP_454836.1">
    <property type="nucleotide sequence ID" value="NC_003198.1"/>
</dbReference>
<dbReference type="RefSeq" id="WP_000741216.1">
    <property type="nucleotide sequence ID" value="NZ_WSUR01000009.1"/>
</dbReference>
<dbReference type="SMR" id="Q8Z9A1"/>
<dbReference type="STRING" id="220341.gene:17584285"/>
<dbReference type="KEGG" id="stt:t0230"/>
<dbReference type="KEGG" id="sty:STY0252"/>
<dbReference type="PATRIC" id="fig|220341.7.peg.252"/>
<dbReference type="eggNOG" id="COG0763">
    <property type="taxonomic scope" value="Bacteria"/>
</dbReference>
<dbReference type="HOGENOM" id="CLU_036577_3_0_6"/>
<dbReference type="OMA" id="YVILPFE"/>
<dbReference type="OrthoDB" id="9801642at2"/>
<dbReference type="UniPathway" id="UPA00359">
    <property type="reaction ID" value="UER00481"/>
</dbReference>
<dbReference type="Proteomes" id="UP000000541">
    <property type="component" value="Chromosome"/>
</dbReference>
<dbReference type="Proteomes" id="UP000002670">
    <property type="component" value="Chromosome"/>
</dbReference>
<dbReference type="GO" id="GO:0016020">
    <property type="term" value="C:membrane"/>
    <property type="evidence" value="ECO:0007669"/>
    <property type="project" value="GOC"/>
</dbReference>
<dbReference type="GO" id="GO:0008915">
    <property type="term" value="F:lipid-A-disaccharide synthase activity"/>
    <property type="evidence" value="ECO:0007669"/>
    <property type="project" value="UniProtKB-UniRule"/>
</dbReference>
<dbReference type="GO" id="GO:0005543">
    <property type="term" value="F:phospholipid binding"/>
    <property type="evidence" value="ECO:0007669"/>
    <property type="project" value="TreeGrafter"/>
</dbReference>
<dbReference type="GO" id="GO:0009245">
    <property type="term" value="P:lipid A biosynthetic process"/>
    <property type="evidence" value="ECO:0007669"/>
    <property type="project" value="UniProtKB-UniRule"/>
</dbReference>
<dbReference type="CDD" id="cd01635">
    <property type="entry name" value="Glycosyltransferase_GTB-type"/>
    <property type="match status" value="1"/>
</dbReference>
<dbReference type="HAMAP" id="MF_00392">
    <property type="entry name" value="LpxB"/>
    <property type="match status" value="1"/>
</dbReference>
<dbReference type="InterPro" id="IPR003835">
    <property type="entry name" value="Glyco_trans_19"/>
</dbReference>
<dbReference type="NCBIfam" id="TIGR00215">
    <property type="entry name" value="lpxB"/>
    <property type="match status" value="1"/>
</dbReference>
<dbReference type="PANTHER" id="PTHR30372">
    <property type="entry name" value="LIPID-A-DISACCHARIDE SYNTHASE"/>
    <property type="match status" value="1"/>
</dbReference>
<dbReference type="PANTHER" id="PTHR30372:SF4">
    <property type="entry name" value="LIPID-A-DISACCHARIDE SYNTHASE, MITOCHONDRIAL-RELATED"/>
    <property type="match status" value="1"/>
</dbReference>
<dbReference type="Pfam" id="PF02684">
    <property type="entry name" value="LpxB"/>
    <property type="match status" value="1"/>
</dbReference>
<dbReference type="SUPFAM" id="SSF53756">
    <property type="entry name" value="UDP-Glycosyltransferase/glycogen phosphorylase"/>
    <property type="match status" value="1"/>
</dbReference>
<sequence length="382" mass="42452">MAAQRPLTIALVAGETSGDILGAGLIRALKARVPNARFVGVAGPRMQAEGCEAWYEMEELAVMGIVEVLGRLRRLLHIRADLTRRFTELKPDVFVGIDAPDFNITLEGNLKKQGIKTIHYVSPSVWAWRQKRVFKIGRSTHMVLAFLPFEKAFYDKFNVPCRFIGHTMADAMPLDPDKNAARDVLGIPHDAHCLALLPGSRGAEVEMLSADFLKTAQLLRQRYPDLEVVVPLVNAKRREQFEKIKAEVAPDLAVHLLDGMAREAMIASDAALLASGTAALECMLAKCPMVVGYRMKPFTFWLAKRLVKTEYVSLPNLLAGRELVKELLQEECEPQKLAEALLPLLANGKTSHAMHDTFRELHQQIRCNADEQAADAVLELAQ</sequence>
<feature type="chain" id="PRO_0000190183" description="Lipid-A-disaccharide synthase">
    <location>
        <begin position="1"/>
        <end position="382"/>
    </location>
</feature>
<comment type="function">
    <text evidence="1">Condensation of UDP-2,3-diacylglucosamine and 2,3-diacylglucosamine-1-phosphate to form lipid A disaccharide, a precursor of lipid A, a phosphorylated glycolipid that anchors the lipopolysaccharide to the outer membrane of the cell.</text>
</comment>
<comment type="catalytic activity">
    <reaction evidence="1">
        <text>2-N,3-O-bis[(3R)-3-hydroxytetradecanoyl]-alpha-D-glucosaminyl 1-phosphate + UDP-2-N,3-O-bis[(3R)-3-hydroxytetradecanoyl]-alpha-D-glucosamine = lipid A disaccharide (E. coli) + UDP + H(+)</text>
        <dbReference type="Rhea" id="RHEA:22668"/>
        <dbReference type="ChEBI" id="CHEBI:15378"/>
        <dbReference type="ChEBI" id="CHEBI:57957"/>
        <dbReference type="ChEBI" id="CHEBI:58223"/>
        <dbReference type="ChEBI" id="CHEBI:58466"/>
        <dbReference type="ChEBI" id="CHEBI:78847"/>
    </reaction>
</comment>
<comment type="catalytic activity">
    <reaction evidence="1">
        <text>a lipid X + a UDP-2-N,3-O-bis[(3R)-3-hydroxyacyl]-alpha-D-glucosamine = a lipid A disaccharide + UDP + H(+)</text>
        <dbReference type="Rhea" id="RHEA:67828"/>
        <dbReference type="ChEBI" id="CHEBI:15378"/>
        <dbReference type="ChEBI" id="CHEBI:58223"/>
        <dbReference type="ChEBI" id="CHEBI:137748"/>
        <dbReference type="ChEBI" id="CHEBI:176338"/>
        <dbReference type="ChEBI" id="CHEBI:176343"/>
        <dbReference type="EC" id="2.4.1.182"/>
    </reaction>
</comment>
<comment type="pathway">
    <text evidence="1">Glycolipid biosynthesis; lipid IV(A) biosynthesis; lipid IV(A) from (3R)-3-hydroxytetradecanoyl-[acyl-carrier-protein] and UDP-N-acetyl-alpha-D-glucosamine: step 5/6.</text>
</comment>
<comment type="similarity">
    <text evidence="1">Belongs to the LpxB family.</text>
</comment>
<evidence type="ECO:0000255" key="1">
    <source>
        <dbReference type="HAMAP-Rule" id="MF_00392"/>
    </source>
</evidence>
<gene>
    <name evidence="1" type="primary">lpxB</name>
    <name type="ordered locus">STY0252</name>
    <name type="ordered locus">t0230</name>
</gene>
<reference key="1">
    <citation type="journal article" date="2001" name="Nature">
        <title>Complete genome sequence of a multiple drug resistant Salmonella enterica serovar Typhi CT18.</title>
        <authorList>
            <person name="Parkhill J."/>
            <person name="Dougan G."/>
            <person name="James K.D."/>
            <person name="Thomson N.R."/>
            <person name="Pickard D."/>
            <person name="Wain J."/>
            <person name="Churcher C.M."/>
            <person name="Mungall K.L."/>
            <person name="Bentley S.D."/>
            <person name="Holden M.T.G."/>
            <person name="Sebaihia M."/>
            <person name="Baker S."/>
            <person name="Basham D."/>
            <person name="Brooks K."/>
            <person name="Chillingworth T."/>
            <person name="Connerton P."/>
            <person name="Cronin A."/>
            <person name="Davis P."/>
            <person name="Davies R.M."/>
            <person name="Dowd L."/>
            <person name="White N."/>
            <person name="Farrar J."/>
            <person name="Feltwell T."/>
            <person name="Hamlin N."/>
            <person name="Haque A."/>
            <person name="Hien T.T."/>
            <person name="Holroyd S."/>
            <person name="Jagels K."/>
            <person name="Krogh A."/>
            <person name="Larsen T.S."/>
            <person name="Leather S."/>
            <person name="Moule S."/>
            <person name="O'Gaora P."/>
            <person name="Parry C."/>
            <person name="Quail M.A."/>
            <person name="Rutherford K.M."/>
            <person name="Simmonds M."/>
            <person name="Skelton J."/>
            <person name="Stevens K."/>
            <person name="Whitehead S."/>
            <person name="Barrell B.G."/>
        </authorList>
    </citation>
    <scope>NUCLEOTIDE SEQUENCE [LARGE SCALE GENOMIC DNA]</scope>
    <source>
        <strain>CT18</strain>
    </source>
</reference>
<reference key="2">
    <citation type="journal article" date="2003" name="J. Bacteriol.">
        <title>Comparative genomics of Salmonella enterica serovar Typhi strains Ty2 and CT18.</title>
        <authorList>
            <person name="Deng W."/>
            <person name="Liou S.-R."/>
            <person name="Plunkett G. III"/>
            <person name="Mayhew G.F."/>
            <person name="Rose D.J."/>
            <person name="Burland V."/>
            <person name="Kodoyianni V."/>
            <person name="Schwartz D.C."/>
            <person name="Blattner F.R."/>
        </authorList>
    </citation>
    <scope>NUCLEOTIDE SEQUENCE [LARGE SCALE GENOMIC DNA]</scope>
    <source>
        <strain>ATCC 700931 / Ty2</strain>
    </source>
</reference>
<protein>
    <recommendedName>
        <fullName evidence="1">Lipid-A-disaccharide synthase</fullName>
        <ecNumber evidence="1">2.4.1.182</ecNumber>
    </recommendedName>
</protein>
<keyword id="KW-0328">Glycosyltransferase</keyword>
<keyword id="KW-0441">Lipid A biosynthesis</keyword>
<keyword id="KW-0444">Lipid biosynthesis</keyword>
<keyword id="KW-0443">Lipid metabolism</keyword>
<keyword id="KW-0808">Transferase</keyword>
<proteinExistence type="inferred from homology"/>
<organism>
    <name type="scientific">Salmonella typhi</name>
    <dbReference type="NCBI Taxonomy" id="90370"/>
    <lineage>
        <taxon>Bacteria</taxon>
        <taxon>Pseudomonadati</taxon>
        <taxon>Pseudomonadota</taxon>
        <taxon>Gammaproteobacteria</taxon>
        <taxon>Enterobacterales</taxon>
        <taxon>Enterobacteriaceae</taxon>
        <taxon>Salmonella</taxon>
    </lineage>
</organism>
<accession>Q8Z9A1</accession>